<dbReference type="EMBL" id="BC083575">
    <property type="protein sequence ID" value="AAH83575.1"/>
    <property type="molecule type" value="mRNA"/>
</dbReference>
<dbReference type="RefSeq" id="NP_001094475.1">
    <property type="nucleotide sequence ID" value="NM_001101005.1"/>
</dbReference>
<dbReference type="SMR" id="Q5XIU5"/>
<dbReference type="BioGRID" id="604670">
    <property type="interactions" value="1"/>
</dbReference>
<dbReference type="FunCoup" id="Q5XIU5">
    <property type="interactions" value="3016"/>
</dbReference>
<dbReference type="STRING" id="10116.ENSRNOP00000038926"/>
<dbReference type="iPTMnet" id="Q5XIU5"/>
<dbReference type="PhosphoSitePlus" id="Q5XIU5"/>
<dbReference type="jPOST" id="Q5XIU5"/>
<dbReference type="PaxDb" id="10116-ENSRNOP00000038926"/>
<dbReference type="Ensembl" id="ENSRNOT00000029620.6">
    <property type="protein sequence ID" value="ENSRNOP00000038926.6"/>
    <property type="gene ID" value="ENSRNOG00000009640.7"/>
</dbReference>
<dbReference type="GeneID" id="689852"/>
<dbReference type="KEGG" id="rno:689852"/>
<dbReference type="AGR" id="RGD:1587528"/>
<dbReference type="CTD" id="9491"/>
<dbReference type="RGD" id="1587528">
    <property type="gene designation" value="Psmf1"/>
</dbReference>
<dbReference type="eggNOG" id="KOG4761">
    <property type="taxonomic scope" value="Eukaryota"/>
</dbReference>
<dbReference type="GeneTree" id="ENSGT00390000012257"/>
<dbReference type="InParanoid" id="Q5XIU5"/>
<dbReference type="OMA" id="PFGFPDI"/>
<dbReference type="OrthoDB" id="68090at2759"/>
<dbReference type="PhylomeDB" id="Q5XIU5"/>
<dbReference type="PRO" id="PR:Q5XIU5"/>
<dbReference type="Proteomes" id="UP000002494">
    <property type="component" value="Chromosome 3"/>
</dbReference>
<dbReference type="GO" id="GO:0005829">
    <property type="term" value="C:cytosol"/>
    <property type="evidence" value="ECO:0000250"/>
    <property type="project" value="UniProtKB"/>
</dbReference>
<dbReference type="GO" id="GO:0005783">
    <property type="term" value="C:endoplasmic reticulum"/>
    <property type="evidence" value="ECO:0000250"/>
    <property type="project" value="UniProtKB"/>
</dbReference>
<dbReference type="GO" id="GO:0048471">
    <property type="term" value="C:perinuclear region of cytoplasm"/>
    <property type="evidence" value="ECO:0000266"/>
    <property type="project" value="RGD"/>
</dbReference>
<dbReference type="GO" id="GO:0000502">
    <property type="term" value="C:proteasome complex"/>
    <property type="evidence" value="ECO:0007669"/>
    <property type="project" value="UniProtKB-KW"/>
</dbReference>
<dbReference type="GO" id="GO:0004866">
    <property type="term" value="F:endopeptidase inhibitor activity"/>
    <property type="evidence" value="ECO:0007669"/>
    <property type="project" value="InterPro"/>
</dbReference>
<dbReference type="GO" id="GO:0070628">
    <property type="term" value="F:proteasome binding"/>
    <property type="evidence" value="ECO:0000250"/>
    <property type="project" value="UniProtKB"/>
</dbReference>
<dbReference type="GO" id="GO:0046982">
    <property type="term" value="F:protein heterodimerization activity"/>
    <property type="evidence" value="ECO:0000266"/>
    <property type="project" value="RGD"/>
</dbReference>
<dbReference type="GO" id="GO:0042803">
    <property type="term" value="F:protein homodimerization activity"/>
    <property type="evidence" value="ECO:0000266"/>
    <property type="project" value="RGD"/>
</dbReference>
<dbReference type="GO" id="GO:1901799">
    <property type="term" value="P:negative regulation of proteasomal protein catabolic process"/>
    <property type="evidence" value="ECO:0000250"/>
    <property type="project" value="UniProtKB"/>
</dbReference>
<dbReference type="GO" id="GO:0043161">
    <property type="term" value="P:proteasome-mediated ubiquitin-dependent protein catabolic process"/>
    <property type="evidence" value="ECO:0007669"/>
    <property type="project" value="InterPro"/>
</dbReference>
<dbReference type="GO" id="GO:0006511">
    <property type="term" value="P:ubiquitin-dependent protein catabolic process"/>
    <property type="evidence" value="ECO:0000250"/>
    <property type="project" value="UniProtKB"/>
</dbReference>
<dbReference type="FunFam" id="3.40.1000.30:FF:000002">
    <property type="entry name" value="Proteasome inhibitor PI31 subunit"/>
    <property type="match status" value="1"/>
</dbReference>
<dbReference type="Gene3D" id="3.40.1000.30">
    <property type="match status" value="1"/>
</dbReference>
<dbReference type="InterPro" id="IPR045128">
    <property type="entry name" value="PI31-like"/>
</dbReference>
<dbReference type="InterPro" id="IPR013886">
    <property type="entry name" value="PI31_Prot_C"/>
</dbReference>
<dbReference type="InterPro" id="IPR021625">
    <property type="entry name" value="PI31_Prot_N"/>
</dbReference>
<dbReference type="PANTHER" id="PTHR13266">
    <property type="entry name" value="PROTEASOME INHIBITOR"/>
    <property type="match status" value="1"/>
</dbReference>
<dbReference type="PANTHER" id="PTHR13266:SF1">
    <property type="entry name" value="PROTEASOME INHIBITOR PI31 SUBUNIT"/>
    <property type="match status" value="1"/>
</dbReference>
<dbReference type="Pfam" id="PF08577">
    <property type="entry name" value="PI31_Prot_C"/>
    <property type="match status" value="1"/>
</dbReference>
<dbReference type="Pfam" id="PF11566">
    <property type="entry name" value="PI31_Prot_N"/>
    <property type="match status" value="1"/>
</dbReference>
<evidence type="ECO:0000250" key="1"/>
<evidence type="ECO:0000250" key="2">
    <source>
        <dbReference type="UniProtKB" id="Q8BHL8"/>
    </source>
</evidence>
<evidence type="ECO:0000250" key="3">
    <source>
        <dbReference type="UniProtKB" id="Q92530"/>
    </source>
</evidence>
<evidence type="ECO:0000256" key="4">
    <source>
        <dbReference type="SAM" id="MobiDB-lite"/>
    </source>
</evidence>
<evidence type="ECO:0000305" key="5"/>
<evidence type="ECO:0007744" key="6">
    <source>
    </source>
</evidence>
<keyword id="KW-0007">Acetylation</keyword>
<keyword id="KW-0963">Cytoplasm</keyword>
<keyword id="KW-0256">Endoplasmic reticulum</keyword>
<keyword id="KW-0488">Methylation</keyword>
<keyword id="KW-0597">Phosphoprotein</keyword>
<keyword id="KW-0647">Proteasome</keyword>
<keyword id="KW-1185">Reference proteome</keyword>
<name>PSMF1_RAT</name>
<organism>
    <name type="scientific">Rattus norvegicus</name>
    <name type="common">Rat</name>
    <dbReference type="NCBI Taxonomy" id="10116"/>
    <lineage>
        <taxon>Eukaryota</taxon>
        <taxon>Metazoa</taxon>
        <taxon>Chordata</taxon>
        <taxon>Craniata</taxon>
        <taxon>Vertebrata</taxon>
        <taxon>Euteleostomi</taxon>
        <taxon>Mammalia</taxon>
        <taxon>Eutheria</taxon>
        <taxon>Euarchontoglires</taxon>
        <taxon>Glires</taxon>
        <taxon>Rodentia</taxon>
        <taxon>Myomorpha</taxon>
        <taxon>Muroidea</taxon>
        <taxon>Muridae</taxon>
        <taxon>Murinae</taxon>
        <taxon>Rattus</taxon>
    </lineage>
</organism>
<feature type="initiator methionine" description="Removed" evidence="3">
    <location>
        <position position="1"/>
    </location>
</feature>
<feature type="chain" id="PRO_0000220923" description="Proteasome inhibitor PI31 subunit">
    <location>
        <begin position="2"/>
        <end position="271"/>
    </location>
</feature>
<feature type="region of interest" description="Important for homodimerization and interaction with FBXO7" evidence="1">
    <location>
        <begin position="2"/>
        <end position="150"/>
    </location>
</feature>
<feature type="region of interest" description="Disordered" evidence="4">
    <location>
        <begin position="221"/>
        <end position="271"/>
    </location>
</feature>
<feature type="compositionally biased region" description="Pro residues" evidence="4">
    <location>
        <begin position="255"/>
        <end position="265"/>
    </location>
</feature>
<feature type="modified residue" description="N-acetylalanine" evidence="3">
    <location>
        <position position="2"/>
    </location>
</feature>
<feature type="modified residue" description="Phosphoserine" evidence="6">
    <location>
        <position position="153"/>
    </location>
</feature>
<feature type="modified residue" description="Phosphoserine" evidence="6">
    <location>
        <position position="189"/>
    </location>
</feature>
<feature type="modified residue" description="Omega-N-methylarginine" evidence="2">
    <location>
        <position position="205"/>
    </location>
</feature>
<feature type="modified residue" description="Asymmetric dimethylarginine" evidence="2">
    <location>
        <position position="219"/>
    </location>
</feature>
<feature type="modified residue" description="Omega-N-methylarginine" evidence="3">
    <location>
        <position position="231"/>
    </location>
</feature>
<feature type="modified residue" description="Phosphoserine" evidence="3">
    <location>
        <position position="252"/>
    </location>
</feature>
<proteinExistence type="evidence at protein level"/>
<protein>
    <recommendedName>
        <fullName>Proteasome inhibitor PI31 subunit</fullName>
    </recommendedName>
</protein>
<accession>Q5XIU5</accession>
<sequence>MAGLEVLFASAAPAMTCPQDALVCFLHWEVVTNGYYGLGTGDQPDPNDKKSELLPAEWNSNKELYALRYESKDGARKLLLKAVSVENGMIINVLEHGTQQVADLTLNLDDYIDAEDLSDFHRTYKNSEELRSRIRSGIITPIHEQWEKVRLSSPPREFPPATAREVDPLRISSHHPHTSRQPTWRDPLSPFAVGGEDLDPFGCQRGGMIVDPLRSGFPRALIDPSSGLPNRLPPGAVPPGARFDPFGPIGTSPSGPNPDHLPPPGYDDMYL</sequence>
<gene>
    <name type="primary">Psmf1</name>
</gene>
<reference key="1">
    <citation type="journal article" date="2004" name="Genome Res.">
        <title>The status, quality, and expansion of the NIH full-length cDNA project: the Mammalian Gene Collection (MGC).</title>
        <authorList>
            <consortium name="The MGC Project Team"/>
        </authorList>
    </citation>
    <scope>NUCLEOTIDE SEQUENCE [LARGE SCALE MRNA]</scope>
    <source>
        <tissue>Testis</tissue>
    </source>
</reference>
<reference key="2">
    <citation type="journal article" date="2012" name="Nat. Commun.">
        <title>Quantitative maps of protein phosphorylation sites across 14 different rat organs and tissues.</title>
        <authorList>
            <person name="Lundby A."/>
            <person name="Secher A."/>
            <person name="Lage K."/>
            <person name="Nordsborg N.B."/>
            <person name="Dmytriyev A."/>
            <person name="Lundby C."/>
            <person name="Olsen J.V."/>
        </authorList>
    </citation>
    <scope>PHOSPHORYLATION [LARGE SCALE ANALYSIS] AT SER-153 AND SER-189</scope>
    <scope>IDENTIFICATION BY MASS SPECTROMETRY [LARGE SCALE ANALYSIS]</scope>
</reference>
<comment type="function">
    <text evidence="1">Plays an important role in control of proteasome function. Inhibits the hydrolysis of protein and peptide substrates by the 20S proteasome. Also inhibits the activation of the proteasome by the proteasome regulatory proteins PA700 and PA28 (By similarity).</text>
</comment>
<comment type="subunit">
    <text evidence="1">Monomer and homodimer. Interacts with FBXO7 (By similarity).</text>
</comment>
<comment type="subcellular location">
    <subcellularLocation>
        <location evidence="1">Cytoplasm</location>
    </subcellularLocation>
    <subcellularLocation>
        <location evidence="1">Endoplasmic reticulum</location>
    </subcellularLocation>
</comment>
<comment type="similarity">
    <text evidence="5">Belongs to the proteasome inhibitor PI31 family.</text>
</comment>